<gene>
    <name evidence="1" type="primary">hslU</name>
    <name type="ordered locus">CT1191</name>
</gene>
<accession>Q8KD63</accession>
<name>HSLU_CHLTE</name>
<organism>
    <name type="scientific">Chlorobaculum tepidum (strain ATCC 49652 / DSM 12025 / NBRC 103806 / TLS)</name>
    <name type="common">Chlorobium tepidum</name>
    <dbReference type="NCBI Taxonomy" id="194439"/>
    <lineage>
        <taxon>Bacteria</taxon>
        <taxon>Pseudomonadati</taxon>
        <taxon>Chlorobiota</taxon>
        <taxon>Chlorobiia</taxon>
        <taxon>Chlorobiales</taxon>
        <taxon>Chlorobiaceae</taxon>
        <taxon>Chlorobaculum</taxon>
    </lineage>
</organism>
<comment type="function">
    <text evidence="1">ATPase subunit of a proteasome-like degradation complex; this subunit has chaperone activity. The binding of ATP and its subsequent hydrolysis by HslU are essential for unfolding of protein substrates subsequently hydrolyzed by HslV. HslU recognizes the N-terminal part of its protein substrates and unfolds these before they are guided to HslV for hydrolysis.</text>
</comment>
<comment type="subunit">
    <text evidence="1">A double ring-shaped homohexamer of HslV is capped on each side by a ring-shaped HslU homohexamer. The assembly of the HslU/HslV complex is dependent on binding of ATP.</text>
</comment>
<comment type="subcellular location">
    <subcellularLocation>
        <location evidence="1">Cytoplasm</location>
    </subcellularLocation>
</comment>
<comment type="similarity">
    <text evidence="1">Belongs to the ClpX chaperone family. HslU subfamily.</text>
</comment>
<evidence type="ECO:0000255" key="1">
    <source>
        <dbReference type="HAMAP-Rule" id="MF_00249"/>
    </source>
</evidence>
<proteinExistence type="inferred from homology"/>
<protein>
    <recommendedName>
        <fullName evidence="1">ATP-dependent protease ATPase subunit HslU</fullName>
    </recommendedName>
    <alternativeName>
        <fullName evidence="1">Unfoldase HslU</fullName>
    </alternativeName>
</protein>
<sequence>MIQPDEPQDFPVKLIDKEQLTPTQIVEQLDKYIIGQKDAKRSVAIALRNRLRRQNVSEELRDEIMPNNIIMIGPTGVGKTEIARRLAKLAKAPFVKVEASKFTEVGYVGRDVESMIRDLVEQAVAMVRSEKTEEVREKAALLVEERLLDILLPPVSGLEESEHVGDEEEAVVVEGDAEVVVEKNLEREINRKSRQKMRERLRDGRMEDRQIELEVSSDGQGGMMQIFGPLGQMEEIGNIMQDLMSGMPKKRKKRRMTIAEARKYLEQEEVQKLIDMDAVVKEALRKVEDSGIVFIDEIDKIAAPTTGAGGKGPDVSREGVQRDLLPIVEGTAVSTKYGVVKTDHVLFIASGAFHVARPSDLIPELQGRFPIRVELKSLTEEDFFLILTQPRNALIKQYRAMLKTEQIDLEFTEEAIREIARTAAKVNETVENIGARRLHTILTNLLEELMFGIPEMVMDGTIDRNIVIDDNQVREKLGKLVADRDLSQYIL</sequence>
<reference key="1">
    <citation type="journal article" date="2002" name="Proc. Natl. Acad. Sci. U.S.A.">
        <title>The complete genome sequence of Chlorobium tepidum TLS, a photosynthetic, anaerobic, green-sulfur bacterium.</title>
        <authorList>
            <person name="Eisen J.A."/>
            <person name="Nelson K.E."/>
            <person name="Paulsen I.T."/>
            <person name="Heidelberg J.F."/>
            <person name="Wu M."/>
            <person name="Dodson R.J."/>
            <person name="DeBoy R.T."/>
            <person name="Gwinn M.L."/>
            <person name="Nelson W.C."/>
            <person name="Haft D.H."/>
            <person name="Hickey E.K."/>
            <person name="Peterson J.D."/>
            <person name="Durkin A.S."/>
            <person name="Kolonay J.F."/>
            <person name="Yang F."/>
            <person name="Holt I.E."/>
            <person name="Umayam L.A."/>
            <person name="Mason T.M."/>
            <person name="Brenner M."/>
            <person name="Shea T.P."/>
            <person name="Parksey D.S."/>
            <person name="Nierman W.C."/>
            <person name="Feldblyum T.V."/>
            <person name="Hansen C.L."/>
            <person name="Craven M.B."/>
            <person name="Radune D."/>
            <person name="Vamathevan J.J."/>
            <person name="Khouri H.M."/>
            <person name="White O."/>
            <person name="Gruber T.M."/>
            <person name="Ketchum K.A."/>
            <person name="Venter J.C."/>
            <person name="Tettelin H."/>
            <person name="Bryant D.A."/>
            <person name="Fraser C.M."/>
        </authorList>
    </citation>
    <scope>NUCLEOTIDE SEQUENCE [LARGE SCALE GENOMIC DNA]</scope>
    <source>
        <strain>ATCC 49652 / DSM 12025 / NBRC 103806 / TLS</strain>
    </source>
</reference>
<dbReference type="EMBL" id="AE006470">
    <property type="protein sequence ID" value="AAM72424.1"/>
    <property type="molecule type" value="Genomic_DNA"/>
</dbReference>
<dbReference type="RefSeq" id="NP_662082.1">
    <property type="nucleotide sequence ID" value="NC_002932.3"/>
</dbReference>
<dbReference type="RefSeq" id="WP_010932863.1">
    <property type="nucleotide sequence ID" value="NC_002932.3"/>
</dbReference>
<dbReference type="SMR" id="Q8KD63"/>
<dbReference type="STRING" id="194439.CT1191"/>
<dbReference type="EnsemblBacteria" id="AAM72424">
    <property type="protein sequence ID" value="AAM72424"/>
    <property type="gene ID" value="CT1191"/>
</dbReference>
<dbReference type="KEGG" id="cte:CT1191"/>
<dbReference type="PATRIC" id="fig|194439.7.peg.1086"/>
<dbReference type="eggNOG" id="COG1220">
    <property type="taxonomic scope" value="Bacteria"/>
</dbReference>
<dbReference type="HOGENOM" id="CLU_033123_0_0_10"/>
<dbReference type="OrthoDB" id="9804062at2"/>
<dbReference type="Proteomes" id="UP000001007">
    <property type="component" value="Chromosome"/>
</dbReference>
<dbReference type="GO" id="GO:0009376">
    <property type="term" value="C:HslUV protease complex"/>
    <property type="evidence" value="ECO:0007669"/>
    <property type="project" value="UniProtKB-UniRule"/>
</dbReference>
<dbReference type="GO" id="GO:0005524">
    <property type="term" value="F:ATP binding"/>
    <property type="evidence" value="ECO:0007669"/>
    <property type="project" value="UniProtKB-UniRule"/>
</dbReference>
<dbReference type="GO" id="GO:0016887">
    <property type="term" value="F:ATP hydrolysis activity"/>
    <property type="evidence" value="ECO:0007669"/>
    <property type="project" value="InterPro"/>
</dbReference>
<dbReference type="GO" id="GO:0008233">
    <property type="term" value="F:peptidase activity"/>
    <property type="evidence" value="ECO:0007669"/>
    <property type="project" value="InterPro"/>
</dbReference>
<dbReference type="GO" id="GO:0036402">
    <property type="term" value="F:proteasome-activating activity"/>
    <property type="evidence" value="ECO:0007669"/>
    <property type="project" value="UniProtKB-UniRule"/>
</dbReference>
<dbReference type="GO" id="GO:0043335">
    <property type="term" value="P:protein unfolding"/>
    <property type="evidence" value="ECO:0007669"/>
    <property type="project" value="UniProtKB-UniRule"/>
</dbReference>
<dbReference type="GO" id="GO:0051603">
    <property type="term" value="P:proteolysis involved in protein catabolic process"/>
    <property type="evidence" value="ECO:0007669"/>
    <property type="project" value="TreeGrafter"/>
</dbReference>
<dbReference type="CDD" id="cd19498">
    <property type="entry name" value="RecA-like_HslU"/>
    <property type="match status" value="1"/>
</dbReference>
<dbReference type="FunFam" id="3.40.50.300:FF:000213">
    <property type="entry name" value="ATP-dependent protease ATPase subunit HslU"/>
    <property type="match status" value="1"/>
</dbReference>
<dbReference type="FunFam" id="3.40.50.300:FF:000220">
    <property type="entry name" value="ATP-dependent protease ATPase subunit HslU"/>
    <property type="match status" value="1"/>
</dbReference>
<dbReference type="Gene3D" id="1.10.8.60">
    <property type="match status" value="1"/>
</dbReference>
<dbReference type="Gene3D" id="1.10.8.10">
    <property type="entry name" value="DNA helicase RuvA subunit, C-terminal domain"/>
    <property type="match status" value="1"/>
</dbReference>
<dbReference type="Gene3D" id="3.40.50.300">
    <property type="entry name" value="P-loop containing nucleotide triphosphate hydrolases"/>
    <property type="match status" value="2"/>
</dbReference>
<dbReference type="HAMAP" id="MF_00249">
    <property type="entry name" value="HslU"/>
    <property type="match status" value="1"/>
</dbReference>
<dbReference type="InterPro" id="IPR003593">
    <property type="entry name" value="AAA+_ATPase"/>
</dbReference>
<dbReference type="InterPro" id="IPR050052">
    <property type="entry name" value="ATP-dep_Clp_protease_ClpX"/>
</dbReference>
<dbReference type="InterPro" id="IPR003959">
    <property type="entry name" value="ATPase_AAA_core"/>
</dbReference>
<dbReference type="InterPro" id="IPR019489">
    <property type="entry name" value="Clp_ATPase_C"/>
</dbReference>
<dbReference type="InterPro" id="IPR004491">
    <property type="entry name" value="HslU"/>
</dbReference>
<dbReference type="InterPro" id="IPR027417">
    <property type="entry name" value="P-loop_NTPase"/>
</dbReference>
<dbReference type="NCBIfam" id="TIGR00390">
    <property type="entry name" value="hslU"/>
    <property type="match status" value="1"/>
</dbReference>
<dbReference type="NCBIfam" id="NF003544">
    <property type="entry name" value="PRK05201.1"/>
    <property type="match status" value="1"/>
</dbReference>
<dbReference type="PANTHER" id="PTHR48102">
    <property type="entry name" value="ATP-DEPENDENT CLP PROTEASE ATP-BINDING SUBUNIT CLPX-LIKE, MITOCHONDRIAL-RELATED"/>
    <property type="match status" value="1"/>
</dbReference>
<dbReference type="PANTHER" id="PTHR48102:SF3">
    <property type="entry name" value="ATP-DEPENDENT PROTEASE ATPASE SUBUNIT HSLU"/>
    <property type="match status" value="1"/>
</dbReference>
<dbReference type="Pfam" id="PF00004">
    <property type="entry name" value="AAA"/>
    <property type="match status" value="1"/>
</dbReference>
<dbReference type="Pfam" id="PF07724">
    <property type="entry name" value="AAA_2"/>
    <property type="match status" value="1"/>
</dbReference>
<dbReference type="SMART" id="SM00382">
    <property type="entry name" value="AAA"/>
    <property type="match status" value="1"/>
</dbReference>
<dbReference type="SMART" id="SM01086">
    <property type="entry name" value="ClpB_D2-small"/>
    <property type="match status" value="1"/>
</dbReference>
<dbReference type="SUPFAM" id="SSF52540">
    <property type="entry name" value="P-loop containing nucleoside triphosphate hydrolases"/>
    <property type="match status" value="1"/>
</dbReference>
<keyword id="KW-0067">ATP-binding</keyword>
<keyword id="KW-0143">Chaperone</keyword>
<keyword id="KW-0963">Cytoplasm</keyword>
<keyword id="KW-0547">Nucleotide-binding</keyword>
<keyword id="KW-1185">Reference proteome</keyword>
<feature type="chain" id="PRO_0000160495" description="ATP-dependent protease ATPase subunit HslU">
    <location>
        <begin position="1"/>
        <end position="491"/>
    </location>
</feature>
<feature type="binding site" evidence="1">
    <location>
        <position position="34"/>
    </location>
    <ligand>
        <name>ATP</name>
        <dbReference type="ChEBI" id="CHEBI:30616"/>
    </ligand>
</feature>
<feature type="binding site" evidence="1">
    <location>
        <begin position="76"/>
        <end position="81"/>
    </location>
    <ligand>
        <name>ATP</name>
        <dbReference type="ChEBI" id="CHEBI:30616"/>
    </ligand>
</feature>
<feature type="binding site" evidence="1">
    <location>
        <position position="296"/>
    </location>
    <ligand>
        <name>ATP</name>
        <dbReference type="ChEBI" id="CHEBI:30616"/>
    </ligand>
</feature>
<feature type="binding site" evidence="1">
    <location>
        <position position="364"/>
    </location>
    <ligand>
        <name>ATP</name>
        <dbReference type="ChEBI" id="CHEBI:30616"/>
    </ligand>
</feature>
<feature type="binding site" evidence="1">
    <location>
        <position position="436"/>
    </location>
    <ligand>
        <name>ATP</name>
        <dbReference type="ChEBI" id="CHEBI:30616"/>
    </ligand>
</feature>